<proteinExistence type="inferred from homology"/>
<organism>
    <name type="scientific">Staphylococcus epidermidis (strain ATCC 12228 / FDA PCI 1200)</name>
    <dbReference type="NCBI Taxonomy" id="176280"/>
    <lineage>
        <taxon>Bacteria</taxon>
        <taxon>Bacillati</taxon>
        <taxon>Bacillota</taxon>
        <taxon>Bacilli</taxon>
        <taxon>Bacillales</taxon>
        <taxon>Staphylococcaceae</taxon>
        <taxon>Staphylococcus</taxon>
    </lineage>
</organism>
<protein>
    <recommendedName>
        <fullName evidence="1">Isopentenyl-diphosphate delta-isomerase</fullName>
        <shortName evidence="1">IPP isomerase</shortName>
        <ecNumber evidence="1">5.3.3.2</ecNumber>
    </recommendedName>
    <alternativeName>
        <fullName evidence="1">Isopentenyl diphosphate:dimethylallyl diphosphate isomerase</fullName>
    </alternativeName>
    <alternativeName>
        <fullName evidence="1">Isopentenyl pyrophosphate isomerase</fullName>
    </alternativeName>
    <alternativeName>
        <fullName evidence="1">Type 2 isopentenyl diphosphate isomerase</fullName>
        <shortName evidence="1">IDI-2</shortName>
    </alternativeName>
</protein>
<accession>Q8CRB6</accession>
<feature type="chain" id="PRO_0000134427" description="Isopentenyl-diphosphate delta-isomerase">
    <location>
        <begin position="1"/>
        <end position="349"/>
    </location>
</feature>
<feature type="binding site" evidence="1">
    <location>
        <begin position="9"/>
        <end position="10"/>
    </location>
    <ligand>
        <name>substrate</name>
    </ligand>
</feature>
<feature type="binding site" evidence="1">
    <location>
        <begin position="65"/>
        <end position="67"/>
    </location>
    <ligand>
        <name>FMN</name>
        <dbReference type="ChEBI" id="CHEBI:58210"/>
    </ligand>
</feature>
<feature type="binding site" evidence="1">
    <location>
        <begin position="95"/>
        <end position="97"/>
    </location>
    <ligand>
        <name>substrate</name>
    </ligand>
</feature>
<feature type="binding site" evidence="1">
    <location>
        <position position="95"/>
    </location>
    <ligand>
        <name>FMN</name>
        <dbReference type="ChEBI" id="CHEBI:58210"/>
    </ligand>
</feature>
<feature type="binding site" evidence="1">
    <location>
        <position position="124"/>
    </location>
    <ligand>
        <name>FMN</name>
        <dbReference type="ChEBI" id="CHEBI:58210"/>
    </ligand>
</feature>
<feature type="binding site" evidence="1">
    <location>
        <position position="154"/>
    </location>
    <ligand>
        <name>substrate</name>
    </ligand>
</feature>
<feature type="binding site" evidence="1">
    <location>
        <position position="155"/>
    </location>
    <ligand>
        <name>Mg(2+)</name>
        <dbReference type="ChEBI" id="CHEBI:18420"/>
    </ligand>
</feature>
<feature type="binding site" evidence="1">
    <location>
        <position position="186"/>
    </location>
    <ligand>
        <name>FMN</name>
        <dbReference type="ChEBI" id="CHEBI:58210"/>
    </ligand>
</feature>
<feature type="binding site" evidence="1">
    <location>
        <position position="211"/>
    </location>
    <ligand>
        <name>FMN</name>
        <dbReference type="ChEBI" id="CHEBI:58210"/>
    </ligand>
</feature>
<feature type="binding site" evidence="1">
    <location>
        <position position="216"/>
    </location>
    <ligand>
        <name>FMN</name>
        <dbReference type="ChEBI" id="CHEBI:58210"/>
    </ligand>
</feature>
<feature type="binding site" evidence="1">
    <location>
        <begin position="262"/>
        <end position="264"/>
    </location>
    <ligand>
        <name>FMN</name>
        <dbReference type="ChEBI" id="CHEBI:58210"/>
    </ligand>
</feature>
<feature type="binding site" evidence="1">
    <location>
        <begin position="283"/>
        <end position="284"/>
    </location>
    <ligand>
        <name>FMN</name>
        <dbReference type="ChEBI" id="CHEBI:58210"/>
    </ligand>
</feature>
<reference key="1">
    <citation type="journal article" date="2003" name="Mol. Microbiol.">
        <title>Genome-based analysis of virulence genes in a non-biofilm-forming Staphylococcus epidermidis strain (ATCC 12228).</title>
        <authorList>
            <person name="Zhang Y.-Q."/>
            <person name="Ren S.-X."/>
            <person name="Li H.-L."/>
            <person name="Wang Y.-X."/>
            <person name="Fu G."/>
            <person name="Yang J."/>
            <person name="Qin Z.-Q."/>
            <person name="Miao Y.-G."/>
            <person name="Wang W.-Y."/>
            <person name="Chen R.-S."/>
            <person name="Shen Y."/>
            <person name="Chen Z."/>
            <person name="Yuan Z.-H."/>
            <person name="Zhao G.-P."/>
            <person name="Qu D."/>
            <person name="Danchin A."/>
            <person name="Wen Y.-M."/>
        </authorList>
    </citation>
    <scope>NUCLEOTIDE SEQUENCE [LARGE SCALE GENOMIC DNA]</scope>
    <source>
        <strain>ATCC 12228 / FDA PCI 1200</strain>
    </source>
</reference>
<evidence type="ECO:0000255" key="1">
    <source>
        <dbReference type="HAMAP-Rule" id="MF_00354"/>
    </source>
</evidence>
<gene>
    <name evidence="1" type="primary">fni</name>
    <name type="ordered locus">SE_1925</name>
</gene>
<name>IDI2_STAES</name>
<comment type="function">
    <text evidence="1">Involved in the biosynthesis of isoprenoids. Catalyzes the 1,3-allylic rearrangement of the homoallylic substrate isopentenyl (IPP) to its allylic isomer, dimethylallyl diphosphate (DMAPP).</text>
</comment>
<comment type="catalytic activity">
    <reaction evidence="1">
        <text>isopentenyl diphosphate = dimethylallyl diphosphate</text>
        <dbReference type="Rhea" id="RHEA:23284"/>
        <dbReference type="ChEBI" id="CHEBI:57623"/>
        <dbReference type="ChEBI" id="CHEBI:128769"/>
        <dbReference type="EC" id="5.3.3.2"/>
    </reaction>
</comment>
<comment type="cofactor">
    <cofactor evidence="1">
        <name>FMN</name>
        <dbReference type="ChEBI" id="CHEBI:58210"/>
    </cofactor>
</comment>
<comment type="cofactor">
    <cofactor evidence="1">
        <name>NADPH</name>
        <dbReference type="ChEBI" id="CHEBI:57783"/>
    </cofactor>
</comment>
<comment type="cofactor">
    <cofactor evidence="1">
        <name>Mg(2+)</name>
        <dbReference type="ChEBI" id="CHEBI:18420"/>
    </cofactor>
</comment>
<comment type="subunit">
    <text evidence="1">Homooctamer. Dimer of tetramers.</text>
</comment>
<comment type="subcellular location">
    <subcellularLocation>
        <location evidence="1">Cytoplasm</location>
    </subcellularLocation>
</comment>
<comment type="similarity">
    <text evidence="1">Belongs to the IPP isomerase type 2 family.</text>
</comment>
<sequence>MSDSQREQRKNEHVEIAMSQKDALVSDFDKVRFVHHSIPSIDVSQVDMTSHTTKFDLAYPIYINAMTGGSDWTKQINEKLAIVARETGIAMAVGSTHAALRNPNMIETFSIVRKTNPKGTIFSNVGADVPVDKALQAVELLDAQALQIHVNSPQELVMPEGNREFASWMSNIESIVKRVDVPVIIKEVGFGMSKETLQALYDIGVNYVDVSGRGGTNFVDIENERRSNKDMNYLSQWGQSTVESLLESTEFQDRLNIFASGGLRTPLDAVKCLALGAKAIGMSRPFLNQVEQSGITNTVDYVESFIQHMKKIMTMLDAPNIERLRQADIVMSPELISWINQRGLHLNRK</sequence>
<dbReference type="EC" id="5.3.3.2" evidence="1"/>
<dbReference type="EMBL" id="AE015929">
    <property type="protein sequence ID" value="AAO05566.1"/>
    <property type="molecule type" value="Genomic_DNA"/>
</dbReference>
<dbReference type="RefSeq" id="NP_765480.1">
    <property type="nucleotide sequence ID" value="NC_004461.1"/>
</dbReference>
<dbReference type="RefSeq" id="WP_001831537.1">
    <property type="nucleotide sequence ID" value="NZ_WBME01000027.1"/>
</dbReference>
<dbReference type="SMR" id="Q8CRB6"/>
<dbReference type="GeneID" id="50017978"/>
<dbReference type="KEGG" id="sep:SE_1925"/>
<dbReference type="PATRIC" id="fig|176280.10.peg.1879"/>
<dbReference type="eggNOG" id="COG1304">
    <property type="taxonomic scope" value="Bacteria"/>
</dbReference>
<dbReference type="HOGENOM" id="CLU_065515_0_0_9"/>
<dbReference type="OrthoDB" id="9795032at2"/>
<dbReference type="Proteomes" id="UP000001411">
    <property type="component" value="Chromosome"/>
</dbReference>
<dbReference type="GO" id="GO:0005737">
    <property type="term" value="C:cytoplasm"/>
    <property type="evidence" value="ECO:0007669"/>
    <property type="project" value="UniProtKB-SubCell"/>
</dbReference>
<dbReference type="GO" id="GO:0010181">
    <property type="term" value="F:FMN binding"/>
    <property type="evidence" value="ECO:0007669"/>
    <property type="project" value="UniProtKB-UniRule"/>
</dbReference>
<dbReference type="GO" id="GO:0004452">
    <property type="term" value="F:isopentenyl-diphosphate delta-isomerase activity"/>
    <property type="evidence" value="ECO:0007669"/>
    <property type="project" value="UniProtKB-UniRule"/>
</dbReference>
<dbReference type="GO" id="GO:0000287">
    <property type="term" value="F:magnesium ion binding"/>
    <property type="evidence" value="ECO:0007669"/>
    <property type="project" value="UniProtKB-UniRule"/>
</dbReference>
<dbReference type="GO" id="GO:0070402">
    <property type="term" value="F:NADPH binding"/>
    <property type="evidence" value="ECO:0007669"/>
    <property type="project" value="UniProtKB-UniRule"/>
</dbReference>
<dbReference type="GO" id="GO:0016491">
    <property type="term" value="F:oxidoreductase activity"/>
    <property type="evidence" value="ECO:0007669"/>
    <property type="project" value="InterPro"/>
</dbReference>
<dbReference type="GO" id="GO:0008299">
    <property type="term" value="P:isoprenoid biosynthetic process"/>
    <property type="evidence" value="ECO:0007669"/>
    <property type="project" value="UniProtKB-UniRule"/>
</dbReference>
<dbReference type="CDD" id="cd02811">
    <property type="entry name" value="IDI-2_FMN"/>
    <property type="match status" value="1"/>
</dbReference>
<dbReference type="Gene3D" id="3.20.20.70">
    <property type="entry name" value="Aldolase class I"/>
    <property type="match status" value="1"/>
</dbReference>
<dbReference type="HAMAP" id="MF_00354">
    <property type="entry name" value="Idi_2"/>
    <property type="match status" value="1"/>
</dbReference>
<dbReference type="InterPro" id="IPR013785">
    <property type="entry name" value="Aldolase_TIM"/>
</dbReference>
<dbReference type="InterPro" id="IPR000262">
    <property type="entry name" value="FMN-dep_DH"/>
</dbReference>
<dbReference type="InterPro" id="IPR011179">
    <property type="entry name" value="IPdP_isomerase"/>
</dbReference>
<dbReference type="NCBIfam" id="TIGR02151">
    <property type="entry name" value="IPP_isom_2"/>
    <property type="match status" value="1"/>
</dbReference>
<dbReference type="PANTHER" id="PTHR43665">
    <property type="entry name" value="ISOPENTENYL-DIPHOSPHATE DELTA-ISOMERASE"/>
    <property type="match status" value="1"/>
</dbReference>
<dbReference type="PANTHER" id="PTHR43665:SF1">
    <property type="entry name" value="ISOPENTENYL-DIPHOSPHATE DELTA-ISOMERASE"/>
    <property type="match status" value="1"/>
</dbReference>
<dbReference type="Pfam" id="PF01070">
    <property type="entry name" value="FMN_dh"/>
    <property type="match status" value="1"/>
</dbReference>
<dbReference type="PIRSF" id="PIRSF003314">
    <property type="entry name" value="IPP_isomerase"/>
    <property type="match status" value="1"/>
</dbReference>
<dbReference type="SUPFAM" id="SSF51395">
    <property type="entry name" value="FMN-linked oxidoreductases"/>
    <property type="match status" value="1"/>
</dbReference>
<keyword id="KW-0963">Cytoplasm</keyword>
<keyword id="KW-0285">Flavoprotein</keyword>
<keyword id="KW-0288">FMN</keyword>
<keyword id="KW-0413">Isomerase</keyword>
<keyword id="KW-0414">Isoprene biosynthesis</keyword>
<keyword id="KW-0460">Magnesium</keyword>
<keyword id="KW-0479">Metal-binding</keyword>
<keyword id="KW-0521">NADP</keyword>